<feature type="chain" id="PRO_0000293939" description="Small ribosomal subunit protein uS3c">
    <location>
        <begin position="1"/>
        <end position="218"/>
    </location>
</feature>
<feature type="domain" description="KH type-2">
    <location>
        <begin position="47"/>
        <end position="118"/>
    </location>
</feature>
<accession>A4QKN0</accession>
<organism>
    <name type="scientific">Capsella bursa-pastoris</name>
    <name type="common">Shepherd's purse</name>
    <name type="synonym">Thlaspi bursa-pastoris</name>
    <dbReference type="NCBI Taxonomy" id="3719"/>
    <lineage>
        <taxon>Eukaryota</taxon>
        <taxon>Viridiplantae</taxon>
        <taxon>Streptophyta</taxon>
        <taxon>Embryophyta</taxon>
        <taxon>Tracheophyta</taxon>
        <taxon>Spermatophyta</taxon>
        <taxon>Magnoliopsida</taxon>
        <taxon>eudicotyledons</taxon>
        <taxon>Gunneridae</taxon>
        <taxon>Pentapetalae</taxon>
        <taxon>rosids</taxon>
        <taxon>malvids</taxon>
        <taxon>Brassicales</taxon>
        <taxon>Brassicaceae</taxon>
        <taxon>Camelineae</taxon>
        <taxon>Capsella</taxon>
    </lineage>
</organism>
<comment type="subunit">
    <text evidence="1">Part of the 30S ribosomal subunit.</text>
</comment>
<comment type="subcellular location">
    <subcellularLocation>
        <location>Plastid</location>
        <location>Chloroplast</location>
    </subcellularLocation>
</comment>
<comment type="similarity">
    <text evidence="2">Belongs to the universal ribosomal protein uS3 family.</text>
</comment>
<geneLocation type="chloroplast"/>
<sequence length="218" mass="25188">MGQKINPLGFRLGTTQSHHSLWFAQPKKYSEGLEEDKKIRDCIKNYVQKNIRISSGMEGIARIEIQKRIDLIQIIIYMGFPKLLIEDKPRRVEELQMNVQKELNCVNRKLNIAITRISNPYGDPNILAEFIAGQLKNRVSFRKAMKKAIELTEQANTKGIQVQIAGRIDGKEIARVEWIREGRVPLQTIEAKIDYCSYTVRTIYGVLGIKIWIFVDEE</sequence>
<name>RR3_CAPBU</name>
<evidence type="ECO:0000250" key="1"/>
<evidence type="ECO:0000305" key="2"/>
<reference key="1">
    <citation type="submission" date="2007-03" db="EMBL/GenBank/DDBJ databases">
        <title>Sequencing analysis of Capsella bursa-pastoris JO22 chloroplast DNA.</title>
        <authorList>
            <person name="Hosouchi T."/>
            <person name="Tsuruoka H."/>
            <person name="Kotani H."/>
        </authorList>
    </citation>
    <scope>NUCLEOTIDE SEQUENCE [LARGE SCALE GENOMIC DNA]</scope>
</reference>
<protein>
    <recommendedName>
        <fullName evidence="2">Small ribosomal subunit protein uS3c</fullName>
    </recommendedName>
    <alternativeName>
        <fullName>30S ribosomal protein S3, chloroplastic</fullName>
    </alternativeName>
</protein>
<proteinExistence type="inferred from homology"/>
<keyword id="KW-0150">Chloroplast</keyword>
<keyword id="KW-0934">Plastid</keyword>
<keyword id="KW-0687">Ribonucleoprotein</keyword>
<keyword id="KW-0689">Ribosomal protein</keyword>
<keyword id="KW-0694">RNA-binding</keyword>
<keyword id="KW-0699">rRNA-binding</keyword>
<dbReference type="EMBL" id="AP009371">
    <property type="protein sequence ID" value="BAF50235.1"/>
    <property type="molecule type" value="Genomic_DNA"/>
</dbReference>
<dbReference type="RefSeq" id="YP_001123411.1">
    <property type="nucleotide sequence ID" value="NC_009270.1"/>
</dbReference>
<dbReference type="SMR" id="A4QKN0"/>
<dbReference type="GeneID" id="4961665"/>
<dbReference type="GO" id="GO:0009507">
    <property type="term" value="C:chloroplast"/>
    <property type="evidence" value="ECO:0007669"/>
    <property type="project" value="UniProtKB-SubCell"/>
</dbReference>
<dbReference type="GO" id="GO:0022627">
    <property type="term" value="C:cytosolic small ribosomal subunit"/>
    <property type="evidence" value="ECO:0007669"/>
    <property type="project" value="TreeGrafter"/>
</dbReference>
<dbReference type="GO" id="GO:0019843">
    <property type="term" value="F:rRNA binding"/>
    <property type="evidence" value="ECO:0007669"/>
    <property type="project" value="UniProtKB-UniRule"/>
</dbReference>
<dbReference type="GO" id="GO:0003735">
    <property type="term" value="F:structural constituent of ribosome"/>
    <property type="evidence" value="ECO:0007669"/>
    <property type="project" value="InterPro"/>
</dbReference>
<dbReference type="GO" id="GO:0006412">
    <property type="term" value="P:translation"/>
    <property type="evidence" value="ECO:0007669"/>
    <property type="project" value="UniProtKB-UniRule"/>
</dbReference>
<dbReference type="CDD" id="cd02412">
    <property type="entry name" value="KH-II_30S_S3"/>
    <property type="match status" value="1"/>
</dbReference>
<dbReference type="FunFam" id="3.30.1140.32:FF:000003">
    <property type="entry name" value="30S ribosomal protein S3, chloroplastic"/>
    <property type="match status" value="1"/>
</dbReference>
<dbReference type="FunFam" id="3.30.300.20:FF:000008">
    <property type="entry name" value="30S ribosomal protein S3, chloroplastic"/>
    <property type="match status" value="1"/>
</dbReference>
<dbReference type="Gene3D" id="3.30.300.20">
    <property type="match status" value="1"/>
</dbReference>
<dbReference type="Gene3D" id="3.30.1140.32">
    <property type="entry name" value="Ribosomal protein S3, C-terminal domain"/>
    <property type="match status" value="1"/>
</dbReference>
<dbReference type="HAMAP" id="MF_01309_B">
    <property type="entry name" value="Ribosomal_uS3_B"/>
    <property type="match status" value="1"/>
</dbReference>
<dbReference type="InterPro" id="IPR015946">
    <property type="entry name" value="KH_dom-like_a/b"/>
</dbReference>
<dbReference type="InterPro" id="IPR004044">
    <property type="entry name" value="KH_dom_type_2"/>
</dbReference>
<dbReference type="InterPro" id="IPR009019">
    <property type="entry name" value="KH_sf_prok-type"/>
</dbReference>
<dbReference type="InterPro" id="IPR036419">
    <property type="entry name" value="Ribosomal_S3_C_sf"/>
</dbReference>
<dbReference type="InterPro" id="IPR005704">
    <property type="entry name" value="Ribosomal_uS3_bac-typ"/>
</dbReference>
<dbReference type="InterPro" id="IPR001351">
    <property type="entry name" value="Ribosomal_uS3_C"/>
</dbReference>
<dbReference type="InterPro" id="IPR018280">
    <property type="entry name" value="Ribosomal_uS3_CS"/>
</dbReference>
<dbReference type="NCBIfam" id="TIGR01009">
    <property type="entry name" value="rpsC_bact"/>
    <property type="match status" value="1"/>
</dbReference>
<dbReference type="PANTHER" id="PTHR11760">
    <property type="entry name" value="30S/40S RIBOSOMAL PROTEIN S3"/>
    <property type="match status" value="1"/>
</dbReference>
<dbReference type="PANTHER" id="PTHR11760:SF19">
    <property type="entry name" value="SMALL RIBOSOMAL SUBUNIT PROTEIN US3C"/>
    <property type="match status" value="1"/>
</dbReference>
<dbReference type="Pfam" id="PF00189">
    <property type="entry name" value="Ribosomal_S3_C"/>
    <property type="match status" value="1"/>
</dbReference>
<dbReference type="SUPFAM" id="SSF54814">
    <property type="entry name" value="Prokaryotic type KH domain (KH-domain type II)"/>
    <property type="match status" value="1"/>
</dbReference>
<dbReference type="SUPFAM" id="SSF54821">
    <property type="entry name" value="Ribosomal protein S3 C-terminal domain"/>
    <property type="match status" value="1"/>
</dbReference>
<dbReference type="PROSITE" id="PS50823">
    <property type="entry name" value="KH_TYPE_2"/>
    <property type="match status" value="1"/>
</dbReference>
<dbReference type="PROSITE" id="PS00548">
    <property type="entry name" value="RIBOSOMAL_S3"/>
    <property type="match status" value="1"/>
</dbReference>
<gene>
    <name type="primary">rps3</name>
</gene>